<feature type="chain" id="PRO_1000096576" description="Uracil-DNA glycosylase">
    <location>
        <begin position="1"/>
        <end position="225"/>
    </location>
</feature>
<feature type="active site" description="Proton acceptor" evidence="1">
    <location>
        <position position="67"/>
    </location>
</feature>
<gene>
    <name evidence="1" type="primary">ung</name>
    <name type="ordered locus">CBUD_1058</name>
</gene>
<proteinExistence type="inferred from homology"/>
<name>UNG_COXBN</name>
<accession>A9KCD5</accession>
<protein>
    <recommendedName>
        <fullName evidence="1">Uracil-DNA glycosylase</fullName>
        <shortName evidence="1">UDG</shortName>
        <ecNumber evidence="1">3.2.2.27</ecNumber>
    </recommendedName>
</protein>
<sequence>MTTMAETQTWQTVLGEEKQEPYFQEILDFVKKERKAGKIIYPPQKDIFNALKLTPYEAVKVVILGQDPYHGPNQAHGLAFSVRPGVPAPPSLQNIFKELHADLGVSIPSHGFLEKWAKQGVLLLNAALTVEAGKPQSHANIGWHRFTDKVIESLNDHPEVIVFLLWGSYAQKKSQLITNLRHRILKAPHPSPLSAARGFLGCRHFSKANQLLHEMGRGEIDWALD</sequence>
<keyword id="KW-0963">Cytoplasm</keyword>
<keyword id="KW-0227">DNA damage</keyword>
<keyword id="KW-0234">DNA repair</keyword>
<keyword id="KW-0378">Hydrolase</keyword>
<reference key="1">
    <citation type="journal article" date="2009" name="Infect. Immun.">
        <title>Comparative genomics reveal extensive transposon-mediated genomic plasticity and diversity among potential effector proteins within the genus Coxiella.</title>
        <authorList>
            <person name="Beare P.A."/>
            <person name="Unsworth N."/>
            <person name="Andoh M."/>
            <person name="Voth D.E."/>
            <person name="Omsland A."/>
            <person name="Gilk S.D."/>
            <person name="Williams K.P."/>
            <person name="Sobral B.W."/>
            <person name="Kupko J.J. III"/>
            <person name="Porcella S.F."/>
            <person name="Samuel J.E."/>
            <person name="Heinzen R.A."/>
        </authorList>
    </citation>
    <scope>NUCLEOTIDE SEQUENCE [LARGE SCALE GENOMIC DNA]</scope>
    <source>
        <strain>Dugway 5J108-111</strain>
    </source>
</reference>
<evidence type="ECO:0000255" key="1">
    <source>
        <dbReference type="HAMAP-Rule" id="MF_00148"/>
    </source>
</evidence>
<organism>
    <name type="scientific">Coxiella burnetii (strain Dugway 5J108-111)</name>
    <dbReference type="NCBI Taxonomy" id="434922"/>
    <lineage>
        <taxon>Bacteria</taxon>
        <taxon>Pseudomonadati</taxon>
        <taxon>Pseudomonadota</taxon>
        <taxon>Gammaproteobacteria</taxon>
        <taxon>Legionellales</taxon>
        <taxon>Coxiellaceae</taxon>
        <taxon>Coxiella</taxon>
    </lineage>
</organism>
<dbReference type="EC" id="3.2.2.27" evidence="1"/>
<dbReference type="EMBL" id="CP000733">
    <property type="protein sequence ID" value="ABS78469.2"/>
    <property type="molecule type" value="Genomic_DNA"/>
</dbReference>
<dbReference type="RefSeq" id="WP_011996891.1">
    <property type="nucleotide sequence ID" value="NC_009727.1"/>
</dbReference>
<dbReference type="SMR" id="A9KCD5"/>
<dbReference type="KEGG" id="cbd:CBUD_1058"/>
<dbReference type="HOGENOM" id="CLU_032162_3_0_6"/>
<dbReference type="Proteomes" id="UP000008555">
    <property type="component" value="Chromosome"/>
</dbReference>
<dbReference type="GO" id="GO:0005737">
    <property type="term" value="C:cytoplasm"/>
    <property type="evidence" value="ECO:0007669"/>
    <property type="project" value="UniProtKB-SubCell"/>
</dbReference>
<dbReference type="GO" id="GO:0004844">
    <property type="term" value="F:uracil DNA N-glycosylase activity"/>
    <property type="evidence" value="ECO:0007669"/>
    <property type="project" value="UniProtKB-UniRule"/>
</dbReference>
<dbReference type="GO" id="GO:0097510">
    <property type="term" value="P:base-excision repair, AP site formation via deaminated base removal"/>
    <property type="evidence" value="ECO:0007669"/>
    <property type="project" value="TreeGrafter"/>
</dbReference>
<dbReference type="CDD" id="cd10027">
    <property type="entry name" value="UDG-F1-like"/>
    <property type="match status" value="1"/>
</dbReference>
<dbReference type="FunFam" id="3.40.470.10:FF:000001">
    <property type="entry name" value="Uracil-DNA glycosylase"/>
    <property type="match status" value="1"/>
</dbReference>
<dbReference type="Gene3D" id="3.40.470.10">
    <property type="entry name" value="Uracil-DNA glycosylase-like domain"/>
    <property type="match status" value="1"/>
</dbReference>
<dbReference type="HAMAP" id="MF_00148">
    <property type="entry name" value="UDG"/>
    <property type="match status" value="1"/>
</dbReference>
<dbReference type="InterPro" id="IPR002043">
    <property type="entry name" value="UDG_fam1"/>
</dbReference>
<dbReference type="InterPro" id="IPR018085">
    <property type="entry name" value="Ura-DNA_Glyclase_AS"/>
</dbReference>
<dbReference type="InterPro" id="IPR005122">
    <property type="entry name" value="Uracil-DNA_glycosylase-like"/>
</dbReference>
<dbReference type="InterPro" id="IPR036895">
    <property type="entry name" value="Uracil-DNA_glycosylase-like_sf"/>
</dbReference>
<dbReference type="NCBIfam" id="NF003588">
    <property type="entry name" value="PRK05254.1-1"/>
    <property type="match status" value="1"/>
</dbReference>
<dbReference type="NCBIfam" id="NF003589">
    <property type="entry name" value="PRK05254.1-2"/>
    <property type="match status" value="1"/>
</dbReference>
<dbReference type="NCBIfam" id="NF003591">
    <property type="entry name" value="PRK05254.1-4"/>
    <property type="match status" value="1"/>
</dbReference>
<dbReference type="NCBIfam" id="NF003592">
    <property type="entry name" value="PRK05254.1-5"/>
    <property type="match status" value="1"/>
</dbReference>
<dbReference type="NCBIfam" id="TIGR00628">
    <property type="entry name" value="ung"/>
    <property type="match status" value="1"/>
</dbReference>
<dbReference type="PANTHER" id="PTHR11264">
    <property type="entry name" value="URACIL-DNA GLYCOSYLASE"/>
    <property type="match status" value="1"/>
</dbReference>
<dbReference type="PANTHER" id="PTHR11264:SF0">
    <property type="entry name" value="URACIL-DNA GLYCOSYLASE"/>
    <property type="match status" value="1"/>
</dbReference>
<dbReference type="Pfam" id="PF03167">
    <property type="entry name" value="UDG"/>
    <property type="match status" value="1"/>
</dbReference>
<dbReference type="SMART" id="SM00986">
    <property type="entry name" value="UDG"/>
    <property type="match status" value="1"/>
</dbReference>
<dbReference type="SMART" id="SM00987">
    <property type="entry name" value="UreE_C"/>
    <property type="match status" value="1"/>
</dbReference>
<dbReference type="SUPFAM" id="SSF52141">
    <property type="entry name" value="Uracil-DNA glycosylase-like"/>
    <property type="match status" value="1"/>
</dbReference>
<dbReference type="PROSITE" id="PS00130">
    <property type="entry name" value="U_DNA_GLYCOSYLASE"/>
    <property type="match status" value="1"/>
</dbReference>
<comment type="function">
    <text evidence="1">Excises uracil residues from the DNA which can arise as a result of misincorporation of dUMP residues by DNA polymerase or due to deamination of cytosine.</text>
</comment>
<comment type="catalytic activity">
    <reaction evidence="1">
        <text>Hydrolyzes single-stranded DNA or mismatched double-stranded DNA and polynucleotides, releasing free uracil.</text>
        <dbReference type="EC" id="3.2.2.27"/>
    </reaction>
</comment>
<comment type="subcellular location">
    <subcellularLocation>
        <location evidence="1">Cytoplasm</location>
    </subcellularLocation>
</comment>
<comment type="similarity">
    <text evidence="1">Belongs to the uracil-DNA glycosylase (UDG) superfamily. UNG family.</text>
</comment>